<proteinExistence type="evidence at transcript level"/>
<keyword id="KW-1015">Disulfide bond</keyword>
<keyword id="KW-0964">Secreted</keyword>
<keyword id="KW-0732">Signal</keyword>
<keyword id="KW-0800">Toxin</keyword>
<reference key="1">
    <citation type="journal article" date="2010" name="Zoology">
        <title>Transcriptome analysis of the venom glands of the Chinese wolf spider Lycosa singoriensis.</title>
        <authorList>
            <person name="Zhang Y."/>
            <person name="Chen J."/>
            <person name="Tang X."/>
            <person name="Wang F."/>
            <person name="Jiang L."/>
            <person name="Xiong X."/>
            <person name="Wang M."/>
            <person name="Rong M."/>
            <person name="Liu Z."/>
            <person name="Liang S."/>
        </authorList>
    </citation>
    <scope>NUCLEOTIDE SEQUENCE [LARGE SCALE MRNA]</scope>
    <source>
        <tissue>Venom gland</tissue>
    </source>
</reference>
<comment type="subcellular location">
    <subcellularLocation>
        <location evidence="1">Secreted</location>
    </subcellularLocation>
</comment>
<comment type="tissue specificity">
    <text>Expressed by the venom gland.</text>
</comment>
<comment type="PTM">
    <text evidence="1">Contains 4 disulfide bonds.</text>
</comment>
<comment type="similarity">
    <text evidence="3">Belongs to the neurotoxin 19 (CSTX) family. 07 (U7-Lctx) subfamily.</text>
</comment>
<dbReference type="EMBL" id="EU926047">
    <property type="protein sequence ID" value="ACI41379.1"/>
    <property type="molecule type" value="mRNA"/>
</dbReference>
<dbReference type="EMBL" id="FM864051">
    <property type="protein sequence ID" value="CAS03648.1"/>
    <property type="molecule type" value="mRNA"/>
</dbReference>
<dbReference type="SMR" id="B6DCW3"/>
<dbReference type="ArachnoServer" id="AS000986">
    <property type="toxin name" value="U7-lycotoxin-Ls1d"/>
</dbReference>
<dbReference type="GO" id="GO:0005576">
    <property type="term" value="C:extracellular region"/>
    <property type="evidence" value="ECO:0007669"/>
    <property type="project" value="UniProtKB-SubCell"/>
</dbReference>
<dbReference type="GO" id="GO:0090729">
    <property type="term" value="F:toxin activity"/>
    <property type="evidence" value="ECO:0007669"/>
    <property type="project" value="UniProtKB-KW"/>
</dbReference>
<dbReference type="InterPro" id="IPR019553">
    <property type="entry name" value="Spider_toxin_CSTX_knottin"/>
</dbReference>
<dbReference type="Pfam" id="PF10530">
    <property type="entry name" value="Toxin_35"/>
    <property type="match status" value="1"/>
</dbReference>
<evidence type="ECO:0000250" key="1"/>
<evidence type="ECO:0000255" key="2"/>
<evidence type="ECO:0000305" key="3"/>
<protein>
    <recommendedName>
        <fullName>U7-lycotoxin-Ls1d</fullName>
    </recommendedName>
    <alternativeName>
        <fullName>Toxin-like structure LSTX-G3</fullName>
    </alternativeName>
</protein>
<feature type="signal peptide" evidence="2">
    <location>
        <begin position="1"/>
        <end position="22"/>
    </location>
</feature>
<feature type="propeptide" id="PRO_0000401747" evidence="1">
    <location>
        <begin position="23"/>
        <end position="26"/>
    </location>
</feature>
<feature type="chain" id="PRO_0000401748" description="U7-lycotoxin-Ls1d">
    <location>
        <begin position="27"/>
        <end position="78"/>
    </location>
</feature>
<organism>
    <name type="scientific">Lycosa singoriensis</name>
    <name type="common">Wolf spider</name>
    <name type="synonym">Aranea singoriensis</name>
    <dbReference type="NCBI Taxonomy" id="434756"/>
    <lineage>
        <taxon>Eukaryota</taxon>
        <taxon>Metazoa</taxon>
        <taxon>Ecdysozoa</taxon>
        <taxon>Arthropoda</taxon>
        <taxon>Chelicerata</taxon>
        <taxon>Arachnida</taxon>
        <taxon>Araneae</taxon>
        <taxon>Araneomorphae</taxon>
        <taxon>Entelegynae</taxon>
        <taxon>Lycosoidea</taxon>
        <taxon>Lycosidae</taxon>
        <taxon>Lycosa</taxon>
    </lineage>
</organism>
<accession>B6DCW3</accession>
<sequence length="78" mass="8598">MKLIIFTGLALLLIVSLIDVEAQNEGACLPRGSVCTTNHAGCCSKLGCDCYRRFEKGVEKGQKCWCIPTGLRYSKEKE</sequence>
<name>TX703_LYCSI</name>